<comment type="function">
    <text evidence="1">Binds 5S rRNA, forms part of the central protuberance of the 50S subunit.</text>
</comment>
<comment type="subunit">
    <text evidence="1">Part of the 50S ribosomal subunit; contacts the 5S rRNA.</text>
</comment>
<comment type="subcellular location">
    <subcellularLocation>
        <location>Plastid</location>
        <location>Chloroplast</location>
    </subcellularLocation>
</comment>
<comment type="similarity">
    <text evidence="2">Belongs to the universal ribosomal protein uL5 family.</text>
</comment>
<gene>
    <name type="primary">rpl5</name>
</gene>
<dbReference type="EMBL" id="AF494278">
    <property type="protein sequence ID" value="AAM96564.1"/>
    <property type="molecule type" value="Genomic_DNA"/>
</dbReference>
<dbReference type="RefSeq" id="NP_683837.1">
    <property type="nucleotide sequence ID" value="NC_004115.1"/>
</dbReference>
<dbReference type="SMR" id="Q8M9V3"/>
<dbReference type="GeneID" id="860720"/>
<dbReference type="GO" id="GO:0009507">
    <property type="term" value="C:chloroplast"/>
    <property type="evidence" value="ECO:0007669"/>
    <property type="project" value="UniProtKB-SubCell"/>
</dbReference>
<dbReference type="GO" id="GO:1990904">
    <property type="term" value="C:ribonucleoprotein complex"/>
    <property type="evidence" value="ECO:0007669"/>
    <property type="project" value="UniProtKB-KW"/>
</dbReference>
<dbReference type="GO" id="GO:0005840">
    <property type="term" value="C:ribosome"/>
    <property type="evidence" value="ECO:0007669"/>
    <property type="project" value="UniProtKB-KW"/>
</dbReference>
<dbReference type="GO" id="GO:0019843">
    <property type="term" value="F:rRNA binding"/>
    <property type="evidence" value="ECO:0007669"/>
    <property type="project" value="UniProtKB-UniRule"/>
</dbReference>
<dbReference type="GO" id="GO:0003735">
    <property type="term" value="F:structural constituent of ribosome"/>
    <property type="evidence" value="ECO:0007669"/>
    <property type="project" value="InterPro"/>
</dbReference>
<dbReference type="GO" id="GO:0006412">
    <property type="term" value="P:translation"/>
    <property type="evidence" value="ECO:0007669"/>
    <property type="project" value="UniProtKB-UniRule"/>
</dbReference>
<dbReference type="FunFam" id="3.30.1440.10:FF:000001">
    <property type="entry name" value="50S ribosomal protein L5"/>
    <property type="match status" value="1"/>
</dbReference>
<dbReference type="Gene3D" id="3.30.1440.10">
    <property type="match status" value="1"/>
</dbReference>
<dbReference type="HAMAP" id="MF_01333_B">
    <property type="entry name" value="Ribosomal_uL5_B"/>
    <property type="match status" value="1"/>
</dbReference>
<dbReference type="InterPro" id="IPR002132">
    <property type="entry name" value="Ribosomal_uL5"/>
</dbReference>
<dbReference type="InterPro" id="IPR020930">
    <property type="entry name" value="Ribosomal_uL5_bac-type"/>
</dbReference>
<dbReference type="InterPro" id="IPR031309">
    <property type="entry name" value="Ribosomal_uL5_C"/>
</dbReference>
<dbReference type="InterPro" id="IPR022803">
    <property type="entry name" value="Ribosomal_uL5_dom_sf"/>
</dbReference>
<dbReference type="InterPro" id="IPR031310">
    <property type="entry name" value="Ribosomal_uL5_N"/>
</dbReference>
<dbReference type="NCBIfam" id="NF000585">
    <property type="entry name" value="PRK00010.1"/>
    <property type="match status" value="1"/>
</dbReference>
<dbReference type="PANTHER" id="PTHR11994">
    <property type="entry name" value="60S RIBOSOMAL PROTEIN L11-RELATED"/>
    <property type="match status" value="1"/>
</dbReference>
<dbReference type="Pfam" id="PF00281">
    <property type="entry name" value="Ribosomal_L5"/>
    <property type="match status" value="1"/>
</dbReference>
<dbReference type="Pfam" id="PF00673">
    <property type="entry name" value="Ribosomal_L5_C"/>
    <property type="match status" value="1"/>
</dbReference>
<dbReference type="PIRSF" id="PIRSF002161">
    <property type="entry name" value="Ribosomal_L5"/>
    <property type="match status" value="1"/>
</dbReference>
<dbReference type="SUPFAM" id="SSF55282">
    <property type="entry name" value="RL5-like"/>
    <property type="match status" value="1"/>
</dbReference>
<reference key="1">
    <citation type="journal article" date="2002" name="Proc. Natl. Acad. Sci. U.S.A.">
        <title>The chloroplast and mitochondrial genome sequences of the charophyte Chaetosphaeridium globosum: insights into the timing of the events that restructured organelle DNAs within the green algal lineage that led to land plants.</title>
        <authorList>
            <person name="Turmel M."/>
            <person name="Otis C."/>
            <person name="Lemieux C."/>
        </authorList>
    </citation>
    <scope>NUCLEOTIDE SEQUENCE [LARGE SCALE GENOMIC DNA]</scope>
    <source>
        <strain>M1311</strain>
    </source>
</reference>
<accession>Q8M9V3</accession>
<geneLocation type="chloroplast"/>
<sequence length="186" mass="21173">MVQRLKSIYLNNVIPKLNEEAKYKNVHQIPRLKKIVINCGIGEASQNAKTLEYTIRDLSIIAGQRPLVKRAKKAIASFQLRKKMPVGVSVTLRGDAMYAFLDRLINLALPRIRDFQGLNRKSFDGHGNFHLGLKEQLMFPEIDYDKIDKLRGMDICIVTTCTNDNECFQFLSALGMPFQTVSSKKL</sequence>
<name>RK5_CHAGL</name>
<proteinExistence type="inferred from homology"/>
<organism>
    <name type="scientific">Chaetosphaeridium globosum</name>
    <name type="common">Charophycean green alga</name>
    <name type="synonym">Herposteiron globosum</name>
    <dbReference type="NCBI Taxonomy" id="96477"/>
    <lineage>
        <taxon>Eukaryota</taxon>
        <taxon>Viridiplantae</taxon>
        <taxon>Streptophyta</taxon>
        <taxon>Coleochaetophyceae</taxon>
        <taxon>Coleochaetales</taxon>
        <taxon>Chaetosphaeridiaceae</taxon>
        <taxon>Chaetosphaeridium</taxon>
    </lineage>
</organism>
<protein>
    <recommendedName>
        <fullName evidence="2">Large ribosomal subunit protein uL5c</fullName>
    </recommendedName>
    <alternativeName>
        <fullName>50S ribosomal protein L5, chloroplastic</fullName>
    </alternativeName>
</protein>
<evidence type="ECO:0000250" key="1"/>
<evidence type="ECO:0000305" key="2"/>
<keyword id="KW-0150">Chloroplast</keyword>
<keyword id="KW-0934">Plastid</keyword>
<keyword id="KW-0687">Ribonucleoprotein</keyword>
<keyword id="KW-0689">Ribosomal protein</keyword>
<keyword id="KW-0694">RNA-binding</keyword>
<keyword id="KW-0699">rRNA-binding</keyword>
<feature type="chain" id="PRO_0000125036" description="Large ribosomal subunit protein uL5c">
    <location>
        <begin position="1"/>
        <end position="186"/>
    </location>
</feature>